<accession>P01524</accession>
<keyword id="KW-0002">3D-structure</keyword>
<keyword id="KW-0027">Amidation</keyword>
<keyword id="KW-0903">Direct protein sequencing</keyword>
<keyword id="KW-1015">Disulfide bond</keyword>
<keyword id="KW-0379">Hydroxylation</keyword>
<keyword id="KW-0872">Ion channel impairing toxin</keyword>
<keyword id="KW-0528">Neurotoxin</keyword>
<keyword id="KW-0964">Secreted</keyword>
<keyword id="KW-0800">Toxin</keyword>
<keyword id="KW-0738">Voltage-gated sodium channel impairing toxin</keyword>
<name>CM3B_CONGE</name>
<proteinExistence type="evidence at protein level"/>
<reference key="1">
    <citation type="journal article" date="1985" name="J. Biol. Chem.">
        <title>Conus geographus toxins that discriminate between neuronal and muscle sodium channels.</title>
        <authorList>
            <person name="Cruz L.J."/>
            <person name="Gray W.R."/>
            <person name="Olivera B.M."/>
            <person name="Zeikus R.D."/>
            <person name="Kerr L."/>
            <person name="Yoshikami D."/>
            <person name="Moczydlowski E."/>
        </authorList>
    </citation>
    <scope>PROTEIN SEQUENCE</scope>
    <scope>HYDROXYLATION AT PRO-6; PRO-7 AND PRO-17</scope>
    <scope>AMIDATION AT ALA-22</scope>
    <scope>SUBCELLULAR LOCATION</scope>
</reference>
<reference key="2">
    <citation type="journal article" date="1983" name="FEBS Lett.">
        <title>The amino acid sequences of homologous hydroxyproline-containing myotoxins from the marine snail Conus geographus venom.</title>
        <authorList>
            <person name="Sato S."/>
            <person name="Nakamura H."/>
            <person name="Ohizumi Y."/>
            <person name="Kobayashi J."/>
            <person name="Hirata Y."/>
        </authorList>
    </citation>
    <scope>PROTEIN SEQUENCE</scope>
    <scope>SUBCELLULAR LOCATION</scope>
</reference>
<reference key="3">
    <citation type="journal article" date="1996" name="Biochemistry">
        <title>Three-dimensional solution structure of mu-conotoxin GIIIB, a specific blocker of skeletal muscle sodium channels.</title>
        <authorList>
            <person name="Hill J.M."/>
            <person name="Alewood P.F."/>
            <person name="Craik D.J."/>
        </authorList>
    </citation>
    <scope>STRUCTURE BY NMR</scope>
    <scope>DISULFIDE BONDS</scope>
</reference>
<evidence type="ECO:0000250" key="1">
    <source>
        <dbReference type="UniProtKB" id="P01523"/>
    </source>
</evidence>
<evidence type="ECO:0000269" key="2">
    <source>
    </source>
</evidence>
<evidence type="ECO:0000269" key="3">
    <source>
    </source>
</evidence>
<evidence type="ECO:0000269" key="4">
    <source>
    </source>
</evidence>
<evidence type="ECO:0000303" key="5">
    <source>
    </source>
</evidence>
<evidence type="ECO:0000303" key="6">
    <source>
    </source>
</evidence>
<evidence type="ECO:0000305" key="7"/>
<evidence type="ECO:0000305" key="8">
    <source>
    </source>
</evidence>
<evidence type="ECO:0000305" key="9">
    <source>
    </source>
</evidence>
<evidence type="ECO:0007744" key="10">
    <source>
        <dbReference type="PDB" id="1GIB"/>
    </source>
</evidence>
<evidence type="ECO:0007829" key="11">
    <source>
        <dbReference type="PDB" id="1GIB"/>
    </source>
</evidence>
<protein>
    <recommendedName>
        <fullName evidence="5">Mu-conotoxin GIIIB</fullName>
    </recommendedName>
    <alternativeName>
        <fullName evidence="6">Geographutoxin II</fullName>
        <shortName evidence="6">GTx-II</shortName>
    </alternativeName>
    <alternativeName>
        <fullName>Myotoxin II</fullName>
    </alternativeName>
</protein>
<sequence length="22" mass="2599">RDCCTPPRKCKDRRCKPMKCCA</sequence>
<feature type="peptide" id="PRO_0000044494" description="Mu-conotoxin GIIIB" evidence="2 3">
    <location>
        <begin position="1"/>
        <end position="22"/>
    </location>
</feature>
<feature type="modified residue" description="4-hydroxyproline; partial" evidence="2">
    <location>
        <position position="6"/>
    </location>
</feature>
<feature type="modified residue" description="4-hydroxyproline; partial" evidence="2">
    <location>
        <position position="7"/>
    </location>
</feature>
<feature type="modified residue" description="4-hydroxyproline" evidence="2">
    <location>
        <position position="17"/>
    </location>
</feature>
<feature type="modified residue" description="Alanine amide" evidence="2">
    <location>
        <position position="22"/>
    </location>
</feature>
<feature type="disulfide bond" evidence="4 10">
    <location>
        <begin position="3"/>
        <end position="15"/>
    </location>
</feature>
<feature type="disulfide bond" evidence="4 10">
    <location>
        <begin position="4"/>
        <end position="20"/>
    </location>
</feature>
<feature type="disulfide bond" evidence="4 10">
    <location>
        <begin position="10"/>
        <end position="21"/>
    </location>
</feature>
<feature type="strand" evidence="11">
    <location>
        <begin position="3"/>
        <end position="7"/>
    </location>
</feature>
<feature type="helix" evidence="11">
    <location>
        <begin position="13"/>
        <end position="15"/>
    </location>
</feature>
<feature type="turn" evidence="11">
    <location>
        <begin position="19"/>
        <end position="21"/>
    </location>
</feature>
<comment type="function">
    <text evidence="1">Mu-conotoxins block voltage-gated sodium channels (Nav).</text>
</comment>
<comment type="subcellular location">
    <subcellularLocation>
        <location evidence="3 4">Secreted</location>
    </subcellularLocation>
</comment>
<comment type="tissue specificity">
    <text evidence="8 9">Expressed by the venom duct.</text>
</comment>
<comment type="domain">
    <text evidence="7">The cysteine framework is III (CC-C-C-CC). Classified in the M-4 branch, since 4 residues stand between the fourth and the fifth cysteine residues.</text>
</comment>
<comment type="similarity">
    <text evidence="7">Belongs to the conotoxin M superfamily.</text>
</comment>
<dbReference type="PIR" id="A01787">
    <property type="entry name" value="MXKN2"/>
</dbReference>
<dbReference type="PDB" id="1GIB">
    <property type="method" value="NMR"/>
    <property type="chains" value="A=1-22"/>
</dbReference>
<dbReference type="PDBsum" id="1GIB"/>
<dbReference type="SMR" id="P01524"/>
<dbReference type="ConoServer" id="1566">
    <property type="toxin name" value="GIIIB"/>
</dbReference>
<dbReference type="EvolutionaryTrace" id="P01524"/>
<dbReference type="GO" id="GO:0005576">
    <property type="term" value="C:extracellular region"/>
    <property type="evidence" value="ECO:0007669"/>
    <property type="project" value="UniProtKB-SubCell"/>
</dbReference>
<dbReference type="GO" id="GO:0019871">
    <property type="term" value="F:sodium channel inhibitor activity"/>
    <property type="evidence" value="ECO:0007669"/>
    <property type="project" value="InterPro"/>
</dbReference>
<dbReference type="GO" id="GO:0090729">
    <property type="term" value="F:toxin activity"/>
    <property type="evidence" value="ECO:0007669"/>
    <property type="project" value="UniProtKB-KW"/>
</dbReference>
<dbReference type="InterPro" id="IPR008036">
    <property type="entry name" value="Conotoxin_mu-typ"/>
</dbReference>
<dbReference type="Pfam" id="PF05374">
    <property type="entry name" value="Mu-conotoxin"/>
    <property type="match status" value="1"/>
</dbReference>
<dbReference type="PROSITE" id="PS60013">
    <property type="entry name" value="MU_CONOTOXIN"/>
    <property type="match status" value="1"/>
</dbReference>
<organism>
    <name type="scientific">Conus geographus</name>
    <name type="common">Geography cone</name>
    <name type="synonym">Nubecula geographus</name>
    <dbReference type="NCBI Taxonomy" id="6491"/>
    <lineage>
        <taxon>Eukaryota</taxon>
        <taxon>Metazoa</taxon>
        <taxon>Spiralia</taxon>
        <taxon>Lophotrochozoa</taxon>
        <taxon>Mollusca</taxon>
        <taxon>Gastropoda</taxon>
        <taxon>Caenogastropoda</taxon>
        <taxon>Neogastropoda</taxon>
        <taxon>Conoidea</taxon>
        <taxon>Conidae</taxon>
        <taxon>Conus</taxon>
        <taxon>Gastridium</taxon>
    </lineage>
</organism>